<keyword id="KW-0067">ATP-binding</keyword>
<keyword id="KW-0963">Cytoplasm</keyword>
<keyword id="KW-0903">Direct protein sequencing</keyword>
<keyword id="KW-0436">Ligase</keyword>
<keyword id="KW-0547">Nucleotide-binding</keyword>
<keyword id="KW-1185">Reference proteome</keyword>
<protein>
    <recommendedName>
        <fullName evidence="5">Acetate--CoA ligase [ADP-forming] I subunit alpha</fullName>
        <ecNumber evidence="1 2 3">6.2.1.13</ecNumber>
    </recommendedName>
    <alternativeName>
        <fullName evidence="5">ADP-forming acetyl coenzyme A synthetase I subunit alpha</fullName>
        <shortName evidence="5">ACS I subunit alpha</shortName>
    </alternativeName>
</protein>
<comment type="function">
    <text evidence="1 2 3">Catalyzes the reversible formation of acetate and ATP from acetyl-CoA by using ADP and phosphate. Can use other substrates such as isobutyryl-CoA, propionyl-CoA and butyryl-CoA, but not indoleacetyl-CoA, phenylacetyl-CoA or succinyl-CoA. Seems to be involved primarily in the conversion of acetyl-CoA to acetate. Participates in the degradation of branched-chain amino acids via branched-chain-acyl-CoA esters.</text>
</comment>
<comment type="catalytic activity">
    <reaction evidence="1 2 3">
        <text>acetate + ATP + CoA = acetyl-CoA + ADP + phosphate</text>
        <dbReference type="Rhea" id="RHEA:15081"/>
        <dbReference type="ChEBI" id="CHEBI:30089"/>
        <dbReference type="ChEBI" id="CHEBI:30616"/>
        <dbReference type="ChEBI" id="CHEBI:43474"/>
        <dbReference type="ChEBI" id="CHEBI:57287"/>
        <dbReference type="ChEBI" id="CHEBI:57288"/>
        <dbReference type="ChEBI" id="CHEBI:456216"/>
        <dbReference type="EC" id="6.2.1.13"/>
    </reaction>
</comment>
<comment type="activity regulation">
    <text evidence="3">Activity is dependent on magnesium.</text>
</comment>
<comment type="biophysicochemical properties">
    <kinetics>
        <KM evidence="2">150 uM for ADP (at 80 degrees Celsius)</KM>
        <KM evidence="3">60 uM for ADP (at 55 degrees Celsius)</KM>
        <KM evidence="2">132 uM for GDP (at 80 degrees Celsius)</KM>
        <KM evidence="2">396 uM for phosphate (at 80 degrees Celsius)</KM>
        <KM evidence="3">200 uM for phosphate (at 55 degrees Celsius)</KM>
        <KM evidence="2">25 uM for acetyl-CoA (at 80 degrees Celsius)</KM>
        <KM evidence="3">17 uM for acetyl-CoA (at 55 degrees Celsius)</KM>
        <KM evidence="2">29 uM for isobutyryl-CoA (at 80 degrees Celsius)</KM>
        <KM evidence="2">477 uM for ATP (at 80 degrees Celsius)</KM>
        <KM evidence="3">80 uM for ATP (at 55 degrees Celsius)</KM>
        <KM evidence="2">430 uM for GTP (at 80 degrees Celsius)</KM>
        <KM evidence="2">18 uM for CoA (at 80 degrees Celsius)</KM>
        <KM evidence="3">30 uM for CoA (at 55 degrees Celsius)</KM>
        <KM evidence="2">1100 uM for acetate (at 80 degrees Celsius)</KM>
        <KM evidence="3">660 uM for acetate (at 55 degrees Celsius)</KM>
        <KM evidence="2">457 uM for isobutyrate (at 80 degrees Celsius)</KM>
        <text evidence="2">kcat is 203 sec(-1) for ADP. kcat is 411 sec(-1) for GDP. kcat is 182 sec(-1) for phosphate. kcat is 157 sec(-1) for acetyl-CoA. kcat is 121 sec(-1) for isobutyryl-CoA. kcat is 82 sec(-1) for ATP. kcat is 121 sec(-1) for GTP. kcat is 73 sec(-1) for CoA. kcat is 65 sec(-1) for acetate. kcat is 55 sec(-1) for isobutyrate.</text>
    </kinetics>
    <phDependence>
        <text evidence="2 3">Optimum pH is 9.0 (at 80 degrees Celsius) (PubMed:8830684). Optimum pH is 7.0 (at 55 degrees Celsius) (PubMed:9119024).</text>
    </phDependence>
    <temperatureDependence>
        <text evidence="2 3">Optimum temperature is above 90 degrees Celsius.</text>
    </temperatureDependence>
</comment>
<comment type="subunit">
    <text evidence="1 2 3">Heterotetramer of two alpha and two beta subunits.</text>
</comment>
<comment type="subcellular location">
    <subcellularLocation>
        <location evidence="3">Cytoplasm</location>
    </subcellularLocation>
</comment>
<comment type="similarity">
    <text evidence="5">Belongs to the acetate CoA ligase alpha subunit family.</text>
</comment>
<sequence>MSLEALFNPKSVAVIGASAKPGKIGYAIMKNLIEYGYEGKIYPVNIKGGEIEINGRKFKVYKSVLEIPDEVDMAVIVVPAKFVPQVLEECGQKGVKVVPIISSGFGELGEEGKKVEQQLVETARKYGMRILGPNIFGVVYTPAKLNATFGPTDVLPGPLALISQSGALGIALMGWTILEKIGLSAVVSVGNKADIDDADLLEFFKDDENTRAILIYMEGVKDGRRFMEVAKEVSKKKPIIVIKAGRSERGAKAAASHTGSLAGSDKVYSAAFKQSGVLRAYTIGEAFDWARALSNLPEPQGDNVVIITNGGGIGVMATDAAEEEGLHLYDNLEELKIFANHMPPFGSYKNPVDLTGMADGKSYEGAIRDALAHPEMHSIAVLYCQTAVLDPRELAEIVIREYNESGRKKPLVVAIVGGIEAKEAIDMLNENGIPAYPEPERAIKALSALYKWSKWKAKHKEK</sequence>
<feature type="initiator methionine" description="Removed" evidence="2 3">
    <location>
        <position position="1"/>
    </location>
</feature>
<feature type="chain" id="PRO_0000430520" description="Acetate--CoA ligase [ADP-forming] I subunit alpha">
    <location>
        <begin position="2"/>
        <end position="462"/>
    </location>
</feature>
<feature type="sequence conflict" description="In Ref. 3; AA sequence." evidence="5" ref="3">
    <original>S</original>
    <variation>G</variation>
    <location>
        <position position="2"/>
    </location>
</feature>
<feature type="sequence conflict" description="In Ref. 3; AA sequence." evidence="5" ref="3">
    <original>E</original>
    <variation>Q</variation>
    <location>
        <position position="38"/>
    </location>
</feature>
<reference key="1">
    <citation type="journal article" date="1999" name="J. Bacteriol.">
        <title>Acetyl coenzyme A synthetase (ADP forming) from the hyperthermophilic Archaeon pyrococcus furiosus: identification, cloning, separate expression of the encoding genes, acdAI and acdBI, in Escherichia coli, and in vitro reconstitution of the active heterotetrameric enzyme from its recombinant subunits.</title>
        <authorList>
            <person name="Musfeldt M."/>
            <person name="Selig M."/>
            <person name="Schonheit P."/>
        </authorList>
    </citation>
    <scope>NUCLEOTIDE SEQUENCE [GENOMIC DNA]</scope>
    <scope>FUNCTION</scope>
    <scope>CATALYTIC ACTIVITY</scope>
    <scope>SUBUNIT</scope>
    <scope>GENE NAME</scope>
</reference>
<reference key="2">
    <citation type="journal article" date="1999" name="Genetics">
        <title>Divergence of the hyperthermophilic archaea Pyrococcus furiosus and P. horikoshii inferred from complete genomic sequences.</title>
        <authorList>
            <person name="Maeder D.L."/>
            <person name="Weiss R.B."/>
            <person name="Dunn D.M."/>
            <person name="Cherry J.L."/>
            <person name="Gonzalez J.M."/>
            <person name="DiRuggiero J."/>
            <person name="Robb F.T."/>
        </authorList>
    </citation>
    <scope>NUCLEOTIDE SEQUENCE [LARGE SCALE GENOMIC DNA]</scope>
    <source>
        <strain>ATCC 43587 / DSM 3638 / JCM 8422 / Vc1</strain>
    </source>
</reference>
<reference key="3">
    <citation type="journal article" date="1996" name="J. Bacteriol.">
        <title>Purification and characterization of two reversible and ADP-dependent acetyl coenzyme A synthetases from the hyperthermophilic archaeon Pyrococcus furiosus.</title>
        <authorList>
            <person name="Mai X."/>
            <person name="Adams M.W."/>
        </authorList>
    </citation>
    <scope>PROTEIN SEQUENCE OF 2-47</scope>
    <scope>FUNCTION</scope>
    <scope>CATALYTIC ACTIVITY</scope>
    <scope>BIOPHYSICOCHEMICAL PROPERTIES</scope>
    <scope>SUBUNIT</scope>
    <source>
        <strain>ATCC 43587 / DSM 3638 / JCM 8422 / Vc1</strain>
    </source>
</reference>
<reference key="4">
    <citation type="journal article" date="1997" name="Eur. J. Biochem.">
        <title>Purification and properties of acetyl-CoA synthetase (ADP-forming), an archaeal enzyme of acetate formation and ATP synthesis, from the hyperthermophile Pyrococcus furiosus.</title>
        <authorList>
            <person name="Glasemacher J."/>
            <person name="Bock A.K."/>
            <person name="Schmid R."/>
            <person name="Schoenheit P."/>
        </authorList>
    </citation>
    <scope>PROTEIN SEQUENCE OF 2-33</scope>
    <scope>FUNCTION</scope>
    <scope>CATALYTIC ACTIVITY</scope>
    <scope>ACTIVITY REGULATION</scope>
    <scope>BIOPHYSICOCHEMICAL PROPERTIES</scope>
    <scope>SUBUNIT</scope>
    <scope>SUBCELLULAR LOCATION</scope>
    <source>
        <strain>ATCC 43587 / DSM 3638 / JCM 8422 / Vc1</strain>
    </source>
</reference>
<proteinExistence type="evidence at protein level"/>
<gene>
    <name evidence="4" type="primary">acdAI</name>
    <name evidence="6" type="ordered locus">PF1540</name>
</gene>
<evidence type="ECO:0000269" key="1">
    <source>
    </source>
</evidence>
<evidence type="ECO:0000269" key="2">
    <source>
    </source>
</evidence>
<evidence type="ECO:0000269" key="3">
    <source>
    </source>
</evidence>
<evidence type="ECO:0000303" key="4">
    <source>
    </source>
</evidence>
<evidence type="ECO:0000305" key="5"/>
<evidence type="ECO:0000312" key="6">
    <source>
        <dbReference type="EMBL" id="AAL81664.1"/>
    </source>
</evidence>
<organism>
    <name type="scientific">Pyrococcus furiosus (strain ATCC 43587 / DSM 3638 / JCM 8422 / Vc1)</name>
    <dbReference type="NCBI Taxonomy" id="186497"/>
    <lineage>
        <taxon>Archaea</taxon>
        <taxon>Methanobacteriati</taxon>
        <taxon>Methanobacteriota</taxon>
        <taxon>Thermococci</taxon>
        <taxon>Thermococcales</taxon>
        <taxon>Thermococcaceae</taxon>
        <taxon>Pyrococcus</taxon>
    </lineage>
</organism>
<accession>E7FI45</accession>
<accession>Q7LWY1</accession>
<accession>Q9Y8L1</accession>
<name>ACDA1_PYRFU</name>
<dbReference type="EC" id="6.2.1.13" evidence="1 2 3"/>
<dbReference type="EMBL" id="AJ240061">
    <property type="protein sequence ID" value="CAB46516.1"/>
    <property type="molecule type" value="Genomic_DNA"/>
</dbReference>
<dbReference type="EMBL" id="AE009950">
    <property type="protein sequence ID" value="AAL81664.1"/>
    <property type="molecule type" value="Genomic_DNA"/>
</dbReference>
<dbReference type="PIR" id="T48661">
    <property type="entry name" value="T48661"/>
</dbReference>
<dbReference type="RefSeq" id="WP_011012687.1">
    <property type="nucleotide sequence ID" value="NZ_CP023154.1"/>
</dbReference>
<dbReference type="SMR" id="E7FI45"/>
<dbReference type="IntAct" id="E7FI45">
    <property type="interactions" value="45"/>
</dbReference>
<dbReference type="STRING" id="186497.PF1540"/>
<dbReference type="PaxDb" id="186497-PF1540"/>
<dbReference type="GeneID" id="41713359"/>
<dbReference type="KEGG" id="pfu:PF1540"/>
<dbReference type="PATRIC" id="fig|186497.12.peg.1606"/>
<dbReference type="eggNOG" id="arCOG01340">
    <property type="taxonomic scope" value="Archaea"/>
</dbReference>
<dbReference type="HOGENOM" id="CLU_007415_2_3_2"/>
<dbReference type="OrthoDB" id="18103at2157"/>
<dbReference type="PhylomeDB" id="E7FI45"/>
<dbReference type="BioCyc" id="MetaCyc:MONOMER-11822"/>
<dbReference type="BRENDA" id="6.2.1.13">
    <property type="organism ID" value="5243"/>
</dbReference>
<dbReference type="SABIO-RK" id="E7FI45"/>
<dbReference type="Proteomes" id="UP000001013">
    <property type="component" value="Chromosome"/>
</dbReference>
<dbReference type="GO" id="GO:0005737">
    <property type="term" value="C:cytoplasm"/>
    <property type="evidence" value="ECO:0007669"/>
    <property type="project" value="UniProtKB-SubCell"/>
</dbReference>
<dbReference type="GO" id="GO:0043758">
    <property type="term" value="F:acetate-CoA ligase (ADP-forming) activity"/>
    <property type="evidence" value="ECO:0007669"/>
    <property type="project" value="UniProtKB-EC"/>
</dbReference>
<dbReference type="GO" id="GO:0005524">
    <property type="term" value="F:ATP binding"/>
    <property type="evidence" value="ECO:0007669"/>
    <property type="project" value="UniProtKB-KW"/>
</dbReference>
<dbReference type="Gene3D" id="3.40.50.720">
    <property type="entry name" value="NAD(P)-binding Rossmann-like Domain"/>
    <property type="match status" value="1"/>
</dbReference>
<dbReference type="Gene3D" id="3.40.50.261">
    <property type="entry name" value="Succinyl-CoA synthetase domains"/>
    <property type="match status" value="2"/>
</dbReference>
<dbReference type="InterPro" id="IPR014089">
    <property type="entry name" value="AcCoA-synth-alpha"/>
</dbReference>
<dbReference type="InterPro" id="IPR003781">
    <property type="entry name" value="CoA-bd"/>
</dbReference>
<dbReference type="InterPro" id="IPR043938">
    <property type="entry name" value="Ligase_CoA_dom"/>
</dbReference>
<dbReference type="InterPro" id="IPR036291">
    <property type="entry name" value="NAD(P)-bd_dom_sf"/>
</dbReference>
<dbReference type="InterPro" id="IPR032875">
    <property type="entry name" value="Succ_CoA_lig_flav_dom"/>
</dbReference>
<dbReference type="InterPro" id="IPR016102">
    <property type="entry name" value="Succinyl-CoA_synth-like"/>
</dbReference>
<dbReference type="NCBIfam" id="TIGR02717">
    <property type="entry name" value="AcCoA-syn-alpha"/>
    <property type="match status" value="1"/>
</dbReference>
<dbReference type="PANTHER" id="PTHR42793">
    <property type="entry name" value="COA BINDING DOMAIN CONTAINING PROTEIN"/>
    <property type="match status" value="1"/>
</dbReference>
<dbReference type="PANTHER" id="PTHR42793:SF1">
    <property type="entry name" value="PEPTIDYL-LYSINE N-ACETYLTRANSFERASE PATZ"/>
    <property type="match status" value="1"/>
</dbReference>
<dbReference type="Pfam" id="PF13380">
    <property type="entry name" value="CoA_binding_2"/>
    <property type="match status" value="1"/>
</dbReference>
<dbReference type="Pfam" id="PF19045">
    <property type="entry name" value="Ligase_CoA_2"/>
    <property type="match status" value="1"/>
</dbReference>
<dbReference type="Pfam" id="PF13607">
    <property type="entry name" value="Succ_CoA_lig"/>
    <property type="match status" value="1"/>
</dbReference>
<dbReference type="SMART" id="SM00881">
    <property type="entry name" value="CoA_binding"/>
    <property type="match status" value="1"/>
</dbReference>
<dbReference type="SUPFAM" id="SSF51735">
    <property type="entry name" value="NAD(P)-binding Rossmann-fold domains"/>
    <property type="match status" value="1"/>
</dbReference>
<dbReference type="SUPFAM" id="SSF52210">
    <property type="entry name" value="Succinyl-CoA synthetase domains"/>
    <property type="match status" value="2"/>
</dbReference>